<protein>
    <recommendedName>
        <fullName>Hemoglobin subunit beta-2</fullName>
    </recommendedName>
    <alternativeName>
        <fullName>Beta-2-globin</fullName>
    </alternativeName>
    <alternativeName>
        <fullName>Hemoglobin beta-2 chain</fullName>
    </alternativeName>
    <alternativeName>
        <fullName>Hemoglobin beta-minor chain</fullName>
    </alternativeName>
</protein>
<organism>
    <name type="scientific">Tapirus terrestris</name>
    <name type="common">Lowland tapir</name>
    <name type="synonym">Brazilian tapir</name>
    <dbReference type="NCBI Taxonomy" id="9801"/>
    <lineage>
        <taxon>Eukaryota</taxon>
        <taxon>Metazoa</taxon>
        <taxon>Chordata</taxon>
        <taxon>Craniata</taxon>
        <taxon>Vertebrata</taxon>
        <taxon>Euteleostomi</taxon>
        <taxon>Mammalia</taxon>
        <taxon>Eutheria</taxon>
        <taxon>Laurasiatheria</taxon>
        <taxon>Perissodactyla</taxon>
        <taxon>Tapiridae</taxon>
        <taxon>Tapirus</taxon>
    </lineage>
</organism>
<feature type="chain" id="PRO_0000053125" description="Hemoglobin subunit beta-2">
    <location>
        <begin position="1"/>
        <end position="146"/>
    </location>
</feature>
<feature type="domain" description="Globin" evidence="4">
    <location>
        <begin position="2"/>
        <end position="146"/>
    </location>
</feature>
<feature type="binding site" description="distal binding residue">
    <location>
        <position position="63"/>
    </location>
    <ligand>
        <name>heme b</name>
        <dbReference type="ChEBI" id="CHEBI:60344"/>
    </ligand>
    <ligandPart>
        <name>Fe</name>
        <dbReference type="ChEBI" id="CHEBI:18248"/>
    </ligandPart>
</feature>
<feature type="binding site" description="proximal binding residue">
    <location>
        <position position="92"/>
    </location>
    <ligand>
        <name>heme b</name>
        <dbReference type="ChEBI" id="CHEBI:60344"/>
    </ligand>
    <ligandPart>
        <name>Fe</name>
        <dbReference type="ChEBI" id="CHEBI:18248"/>
    </ligandPart>
</feature>
<feature type="modified residue" description="N-acetylvaline" evidence="1">
    <location>
        <position position="1"/>
    </location>
</feature>
<feature type="modified residue" description="N6-succinyllysine" evidence="2">
    <location>
        <position position="17"/>
    </location>
</feature>
<feature type="modified residue" description="Phosphoserine" evidence="2">
    <location>
        <position position="44"/>
    </location>
</feature>
<feature type="modified residue" description="N6-succinyllysine" evidence="2">
    <location>
        <position position="59"/>
    </location>
</feature>
<feature type="modified residue" description="Asymmetric dimethylarginine" evidence="2">
    <location>
        <position position="104"/>
    </location>
</feature>
<feature type="modified residue" description="Phosphothreonine" evidence="3">
    <location>
        <position position="123"/>
    </location>
</feature>
<gene>
    <name type="primary">HBB2</name>
</gene>
<proteinExistence type="evidence at protein level"/>
<name>HBB2_TAPTE</name>
<reference key="1">
    <citation type="journal article" date="1984" name="Hoppe-Seyler's Z. Physiol. Chem.">
        <title>Perissodactyla: the primary structure of hemoglobins from the lowland tapir (Tapirus terrestris): glutamic acid in position 2 of the beta chains.</title>
        <authorList>
            <person name="Mazur G."/>
            <person name="Braunitzer G."/>
        </authorList>
    </citation>
    <scope>PROTEIN SEQUENCE</scope>
</reference>
<keyword id="KW-0007">Acetylation</keyword>
<keyword id="KW-0903">Direct protein sequencing</keyword>
<keyword id="KW-0349">Heme</keyword>
<keyword id="KW-0408">Iron</keyword>
<keyword id="KW-0479">Metal-binding</keyword>
<keyword id="KW-0488">Methylation</keyword>
<keyword id="KW-0561">Oxygen transport</keyword>
<keyword id="KW-0597">Phosphoprotein</keyword>
<keyword id="KW-0813">Transport</keyword>
<sequence length="146" mass="16004">VHLHGDEKAAVLALWDKVDEEKVGGEALGRLLVVYPWTQRFFDSFGDLSTAAAVMGNPKVKAHGKKVLHSFGEGVHHLDDLKVTFAQLSELHCDKLHVDPENFRLLGNVLVVVLAQQFGKAFTPELQAAYQKVVAGVASALAHKYH</sequence>
<dbReference type="PIR" id="A02383">
    <property type="entry name" value="HBTPN"/>
</dbReference>
<dbReference type="SMR" id="P02065"/>
<dbReference type="GO" id="GO:0072562">
    <property type="term" value="C:blood microparticle"/>
    <property type="evidence" value="ECO:0007669"/>
    <property type="project" value="TreeGrafter"/>
</dbReference>
<dbReference type="GO" id="GO:0031838">
    <property type="term" value="C:haptoglobin-hemoglobin complex"/>
    <property type="evidence" value="ECO:0007669"/>
    <property type="project" value="TreeGrafter"/>
</dbReference>
<dbReference type="GO" id="GO:0005833">
    <property type="term" value="C:hemoglobin complex"/>
    <property type="evidence" value="ECO:0007669"/>
    <property type="project" value="InterPro"/>
</dbReference>
<dbReference type="GO" id="GO:0031720">
    <property type="term" value="F:haptoglobin binding"/>
    <property type="evidence" value="ECO:0007669"/>
    <property type="project" value="TreeGrafter"/>
</dbReference>
<dbReference type="GO" id="GO:0020037">
    <property type="term" value="F:heme binding"/>
    <property type="evidence" value="ECO:0007669"/>
    <property type="project" value="InterPro"/>
</dbReference>
<dbReference type="GO" id="GO:0031721">
    <property type="term" value="F:hemoglobin alpha binding"/>
    <property type="evidence" value="ECO:0007669"/>
    <property type="project" value="TreeGrafter"/>
</dbReference>
<dbReference type="GO" id="GO:0046872">
    <property type="term" value="F:metal ion binding"/>
    <property type="evidence" value="ECO:0007669"/>
    <property type="project" value="UniProtKB-KW"/>
</dbReference>
<dbReference type="GO" id="GO:0043177">
    <property type="term" value="F:organic acid binding"/>
    <property type="evidence" value="ECO:0007669"/>
    <property type="project" value="TreeGrafter"/>
</dbReference>
<dbReference type="GO" id="GO:0019825">
    <property type="term" value="F:oxygen binding"/>
    <property type="evidence" value="ECO:0007669"/>
    <property type="project" value="InterPro"/>
</dbReference>
<dbReference type="GO" id="GO:0005344">
    <property type="term" value="F:oxygen carrier activity"/>
    <property type="evidence" value="ECO:0007669"/>
    <property type="project" value="UniProtKB-KW"/>
</dbReference>
<dbReference type="GO" id="GO:0004601">
    <property type="term" value="F:peroxidase activity"/>
    <property type="evidence" value="ECO:0007669"/>
    <property type="project" value="TreeGrafter"/>
</dbReference>
<dbReference type="GO" id="GO:0042744">
    <property type="term" value="P:hydrogen peroxide catabolic process"/>
    <property type="evidence" value="ECO:0007669"/>
    <property type="project" value="TreeGrafter"/>
</dbReference>
<dbReference type="CDD" id="cd08925">
    <property type="entry name" value="Hb-beta-like"/>
    <property type="match status" value="1"/>
</dbReference>
<dbReference type="FunFam" id="1.10.490.10:FF:000001">
    <property type="entry name" value="Hemoglobin subunit beta"/>
    <property type="match status" value="1"/>
</dbReference>
<dbReference type="Gene3D" id="1.10.490.10">
    <property type="entry name" value="Globins"/>
    <property type="match status" value="1"/>
</dbReference>
<dbReference type="InterPro" id="IPR000971">
    <property type="entry name" value="Globin"/>
</dbReference>
<dbReference type="InterPro" id="IPR009050">
    <property type="entry name" value="Globin-like_sf"/>
</dbReference>
<dbReference type="InterPro" id="IPR012292">
    <property type="entry name" value="Globin/Proto"/>
</dbReference>
<dbReference type="InterPro" id="IPR002337">
    <property type="entry name" value="Hemoglobin_b"/>
</dbReference>
<dbReference type="InterPro" id="IPR050056">
    <property type="entry name" value="Hemoglobin_oxygen_transport"/>
</dbReference>
<dbReference type="PANTHER" id="PTHR11442">
    <property type="entry name" value="HEMOGLOBIN FAMILY MEMBER"/>
    <property type="match status" value="1"/>
</dbReference>
<dbReference type="PANTHER" id="PTHR11442:SF42">
    <property type="entry name" value="HEMOGLOBIN SUBUNIT BETA"/>
    <property type="match status" value="1"/>
</dbReference>
<dbReference type="Pfam" id="PF00042">
    <property type="entry name" value="Globin"/>
    <property type="match status" value="1"/>
</dbReference>
<dbReference type="PRINTS" id="PR00814">
    <property type="entry name" value="BETAHAEM"/>
</dbReference>
<dbReference type="SUPFAM" id="SSF46458">
    <property type="entry name" value="Globin-like"/>
    <property type="match status" value="1"/>
</dbReference>
<dbReference type="PROSITE" id="PS01033">
    <property type="entry name" value="GLOBIN"/>
    <property type="match status" value="1"/>
</dbReference>
<comment type="function">
    <text>Involved in oxygen transport from the lung to the various peripheral tissues.</text>
</comment>
<comment type="subunit">
    <text>Heterotetramer of two alpha chains and two beta chains.</text>
</comment>
<comment type="tissue specificity">
    <text>Red blood cells.</text>
</comment>
<comment type="similarity">
    <text evidence="4">Belongs to the globin family.</text>
</comment>
<evidence type="ECO:0000250" key="1">
    <source>
        <dbReference type="UniProtKB" id="P02086"/>
    </source>
</evidence>
<evidence type="ECO:0000250" key="2">
    <source>
        <dbReference type="UniProtKB" id="P02089"/>
    </source>
</evidence>
<evidence type="ECO:0000250" key="3">
    <source>
        <dbReference type="UniProtKB" id="P11517"/>
    </source>
</evidence>
<evidence type="ECO:0000255" key="4">
    <source>
        <dbReference type="PROSITE-ProRule" id="PRU00238"/>
    </source>
</evidence>
<accession>P02065</accession>